<comment type="function">
    <text evidence="1">Transfers and isomerizes the ribose moiety from AdoMet to the 7-aminomethyl group of 7-deazaguanine (preQ1-tRNA) to give epoxyqueuosine (oQ-tRNA).</text>
</comment>
<comment type="catalytic activity">
    <reaction evidence="1">
        <text>7-aminomethyl-7-carbaguanosine(34) in tRNA + S-adenosyl-L-methionine = epoxyqueuosine(34) in tRNA + adenine + L-methionine + 2 H(+)</text>
        <dbReference type="Rhea" id="RHEA:32155"/>
        <dbReference type="Rhea" id="RHEA-COMP:10342"/>
        <dbReference type="Rhea" id="RHEA-COMP:18582"/>
        <dbReference type="ChEBI" id="CHEBI:15378"/>
        <dbReference type="ChEBI" id="CHEBI:16708"/>
        <dbReference type="ChEBI" id="CHEBI:57844"/>
        <dbReference type="ChEBI" id="CHEBI:59789"/>
        <dbReference type="ChEBI" id="CHEBI:82833"/>
        <dbReference type="ChEBI" id="CHEBI:194443"/>
        <dbReference type="EC" id="2.4.99.17"/>
    </reaction>
</comment>
<comment type="pathway">
    <text evidence="1">tRNA modification; tRNA-queuosine biosynthesis.</text>
</comment>
<comment type="subunit">
    <text evidence="1">Monomer.</text>
</comment>
<comment type="subcellular location">
    <subcellularLocation>
        <location evidence="1">Cytoplasm</location>
    </subcellularLocation>
</comment>
<comment type="similarity">
    <text evidence="1">Belongs to the QueA family.</text>
</comment>
<feature type="chain" id="PRO_1000015302" description="S-adenosylmethionine:tRNA ribosyltransferase-isomerase">
    <location>
        <begin position="1"/>
        <end position="366"/>
    </location>
</feature>
<gene>
    <name evidence="1" type="primary">queA</name>
    <name type="ordered locus">Syncc9605_2008</name>
</gene>
<evidence type="ECO:0000255" key="1">
    <source>
        <dbReference type="HAMAP-Rule" id="MF_00113"/>
    </source>
</evidence>
<sequence length="366" mass="39958">MPDPRDLQLSSYDYPLPPERIAQAPVEPRHSARLLMVPPQGEPSTDAAHGQVWDLLEQLQPGDLLVVNDTRVLKARLAVRRSGGGLSELLVLEPRGEGRWLCLARPAKRMRPGDILTIDGSTSISLTVLAEDPASGGRLVQFPSDCRDAETIEGLLNDVGEVPLPPYIERHDPSDSQRYQTRYADRPGAVAAPTAGLHFSDELLAGLQQKGVDLARITLHVGLGTFRPVETEDLTALELHSEWVDVSPAVVEAVQACRGRVIAVGTTSVRALEGAAQAHGGVLKPYTGPVDLVIQPGYRFAVVQGLLTNFHLPKSSLLLLVSALIGREKLLELYHEAIERDYRFFSYGDAMWIAPEVVLPEVQPRP</sequence>
<name>QUEA_SYNSC</name>
<proteinExistence type="inferred from homology"/>
<accession>Q3AI33</accession>
<organism>
    <name type="scientific">Synechococcus sp. (strain CC9605)</name>
    <dbReference type="NCBI Taxonomy" id="110662"/>
    <lineage>
        <taxon>Bacteria</taxon>
        <taxon>Bacillati</taxon>
        <taxon>Cyanobacteriota</taxon>
        <taxon>Cyanophyceae</taxon>
        <taxon>Synechococcales</taxon>
        <taxon>Synechococcaceae</taxon>
        <taxon>Synechococcus</taxon>
    </lineage>
</organism>
<dbReference type="EC" id="2.4.99.17" evidence="1"/>
<dbReference type="EMBL" id="CP000110">
    <property type="protein sequence ID" value="ABB35749.1"/>
    <property type="molecule type" value="Genomic_DNA"/>
</dbReference>
<dbReference type="RefSeq" id="WP_011364957.1">
    <property type="nucleotide sequence ID" value="NC_007516.1"/>
</dbReference>
<dbReference type="SMR" id="Q3AI33"/>
<dbReference type="STRING" id="110662.Syncc9605_2008"/>
<dbReference type="KEGG" id="syd:Syncc9605_2008"/>
<dbReference type="eggNOG" id="COG0809">
    <property type="taxonomic scope" value="Bacteria"/>
</dbReference>
<dbReference type="HOGENOM" id="CLU_039110_1_0_3"/>
<dbReference type="OrthoDB" id="9805933at2"/>
<dbReference type="UniPathway" id="UPA00392"/>
<dbReference type="GO" id="GO:0005737">
    <property type="term" value="C:cytoplasm"/>
    <property type="evidence" value="ECO:0007669"/>
    <property type="project" value="UniProtKB-SubCell"/>
</dbReference>
<dbReference type="GO" id="GO:0051075">
    <property type="term" value="F:S-adenosylmethionine:tRNA ribosyltransferase-isomerase activity"/>
    <property type="evidence" value="ECO:0007669"/>
    <property type="project" value="UniProtKB-EC"/>
</dbReference>
<dbReference type="GO" id="GO:0008616">
    <property type="term" value="P:queuosine biosynthetic process"/>
    <property type="evidence" value="ECO:0007669"/>
    <property type="project" value="UniProtKB-UniRule"/>
</dbReference>
<dbReference type="GO" id="GO:0002099">
    <property type="term" value="P:tRNA wobble guanine modification"/>
    <property type="evidence" value="ECO:0007669"/>
    <property type="project" value="TreeGrafter"/>
</dbReference>
<dbReference type="Gene3D" id="2.40.10.240">
    <property type="entry name" value="QueA-like"/>
    <property type="match status" value="1"/>
</dbReference>
<dbReference type="Gene3D" id="3.40.1780.10">
    <property type="entry name" value="QueA-like"/>
    <property type="match status" value="2"/>
</dbReference>
<dbReference type="HAMAP" id="MF_00113">
    <property type="entry name" value="QueA"/>
    <property type="match status" value="1"/>
</dbReference>
<dbReference type="InterPro" id="IPR003699">
    <property type="entry name" value="QueA"/>
</dbReference>
<dbReference type="InterPro" id="IPR042118">
    <property type="entry name" value="QueA_dom1"/>
</dbReference>
<dbReference type="InterPro" id="IPR042119">
    <property type="entry name" value="QueA_dom2"/>
</dbReference>
<dbReference type="InterPro" id="IPR036100">
    <property type="entry name" value="QueA_sf"/>
</dbReference>
<dbReference type="NCBIfam" id="NF001140">
    <property type="entry name" value="PRK00147.1"/>
    <property type="match status" value="1"/>
</dbReference>
<dbReference type="NCBIfam" id="TIGR00113">
    <property type="entry name" value="queA"/>
    <property type="match status" value="1"/>
</dbReference>
<dbReference type="PANTHER" id="PTHR30307">
    <property type="entry name" value="S-ADENOSYLMETHIONINE:TRNA RIBOSYLTRANSFERASE-ISOMERASE"/>
    <property type="match status" value="1"/>
</dbReference>
<dbReference type="PANTHER" id="PTHR30307:SF0">
    <property type="entry name" value="S-ADENOSYLMETHIONINE:TRNA RIBOSYLTRANSFERASE-ISOMERASE"/>
    <property type="match status" value="1"/>
</dbReference>
<dbReference type="Pfam" id="PF02547">
    <property type="entry name" value="Queuosine_synth"/>
    <property type="match status" value="1"/>
</dbReference>
<dbReference type="SUPFAM" id="SSF111337">
    <property type="entry name" value="QueA-like"/>
    <property type="match status" value="1"/>
</dbReference>
<protein>
    <recommendedName>
        <fullName evidence="1">S-adenosylmethionine:tRNA ribosyltransferase-isomerase</fullName>
        <ecNumber evidence="1">2.4.99.17</ecNumber>
    </recommendedName>
    <alternativeName>
        <fullName evidence="1">Queuosine biosynthesis protein QueA</fullName>
    </alternativeName>
</protein>
<keyword id="KW-0963">Cytoplasm</keyword>
<keyword id="KW-0671">Queuosine biosynthesis</keyword>
<keyword id="KW-0949">S-adenosyl-L-methionine</keyword>
<keyword id="KW-0808">Transferase</keyword>
<reference key="1">
    <citation type="submission" date="2005-07" db="EMBL/GenBank/DDBJ databases">
        <title>Complete sequence of Synechococcus sp. CC9605.</title>
        <authorList>
            <consortium name="US DOE Joint Genome Institute"/>
            <person name="Copeland A."/>
            <person name="Lucas S."/>
            <person name="Lapidus A."/>
            <person name="Barry K."/>
            <person name="Detter J.C."/>
            <person name="Glavina T."/>
            <person name="Hammon N."/>
            <person name="Israni S."/>
            <person name="Pitluck S."/>
            <person name="Schmutz J."/>
            <person name="Martinez M."/>
            <person name="Larimer F."/>
            <person name="Land M."/>
            <person name="Kyrpides N."/>
            <person name="Ivanova N."/>
            <person name="Richardson P."/>
        </authorList>
    </citation>
    <scope>NUCLEOTIDE SEQUENCE [LARGE SCALE GENOMIC DNA]</scope>
    <source>
        <strain>CC9605</strain>
    </source>
</reference>